<proteinExistence type="inferred from homology"/>
<keyword id="KW-0021">Allosteric enzyme</keyword>
<keyword id="KW-0067">ATP-binding</keyword>
<keyword id="KW-0963">Cytoplasm</keyword>
<keyword id="KW-0418">Kinase</keyword>
<keyword id="KW-0547">Nucleotide-binding</keyword>
<keyword id="KW-0665">Pyrimidine biosynthesis</keyword>
<keyword id="KW-1185">Reference proteome</keyword>
<keyword id="KW-0808">Transferase</keyword>
<name>PYRH_LACP3</name>
<accession>Q038L4</accession>
<comment type="function">
    <text evidence="1">Catalyzes the reversible phosphorylation of UMP to UDP.</text>
</comment>
<comment type="catalytic activity">
    <reaction evidence="1">
        <text>UMP + ATP = UDP + ADP</text>
        <dbReference type="Rhea" id="RHEA:24400"/>
        <dbReference type="ChEBI" id="CHEBI:30616"/>
        <dbReference type="ChEBI" id="CHEBI:57865"/>
        <dbReference type="ChEBI" id="CHEBI:58223"/>
        <dbReference type="ChEBI" id="CHEBI:456216"/>
        <dbReference type="EC" id="2.7.4.22"/>
    </reaction>
</comment>
<comment type="activity regulation">
    <text evidence="1">Allosterically activated by GTP. Inhibited by UTP.</text>
</comment>
<comment type="pathway">
    <text evidence="1">Pyrimidine metabolism; CTP biosynthesis via de novo pathway; UDP from UMP (UMPK route): step 1/1.</text>
</comment>
<comment type="subunit">
    <text evidence="1">Homohexamer.</text>
</comment>
<comment type="subcellular location">
    <subcellularLocation>
        <location evidence="1">Cytoplasm</location>
    </subcellularLocation>
</comment>
<comment type="similarity">
    <text evidence="1">Belongs to the UMP kinase family.</text>
</comment>
<dbReference type="EC" id="2.7.4.22" evidence="1"/>
<dbReference type="EMBL" id="CP000423">
    <property type="protein sequence ID" value="ABJ70358.1"/>
    <property type="molecule type" value="Genomic_DNA"/>
</dbReference>
<dbReference type="RefSeq" id="WP_003565806.1">
    <property type="nucleotide sequence ID" value="NC_008526.1"/>
</dbReference>
<dbReference type="RefSeq" id="YP_806800.1">
    <property type="nucleotide sequence ID" value="NC_008526.1"/>
</dbReference>
<dbReference type="SMR" id="Q038L4"/>
<dbReference type="STRING" id="321967.LSEI_1584"/>
<dbReference type="PaxDb" id="321967-LSEI_1584"/>
<dbReference type="GeneID" id="57090238"/>
<dbReference type="KEGG" id="lca:LSEI_1584"/>
<dbReference type="PATRIC" id="fig|321967.11.peg.1564"/>
<dbReference type="HOGENOM" id="CLU_033861_0_0_9"/>
<dbReference type="UniPathway" id="UPA00159">
    <property type="reaction ID" value="UER00275"/>
</dbReference>
<dbReference type="Proteomes" id="UP000001651">
    <property type="component" value="Chromosome"/>
</dbReference>
<dbReference type="GO" id="GO:0005737">
    <property type="term" value="C:cytoplasm"/>
    <property type="evidence" value="ECO:0007669"/>
    <property type="project" value="UniProtKB-SubCell"/>
</dbReference>
<dbReference type="GO" id="GO:0005524">
    <property type="term" value="F:ATP binding"/>
    <property type="evidence" value="ECO:0007669"/>
    <property type="project" value="UniProtKB-KW"/>
</dbReference>
<dbReference type="GO" id="GO:0033862">
    <property type="term" value="F:UMP kinase activity"/>
    <property type="evidence" value="ECO:0007669"/>
    <property type="project" value="UniProtKB-EC"/>
</dbReference>
<dbReference type="GO" id="GO:0044210">
    <property type="term" value="P:'de novo' CTP biosynthetic process"/>
    <property type="evidence" value="ECO:0007669"/>
    <property type="project" value="UniProtKB-UniRule"/>
</dbReference>
<dbReference type="GO" id="GO:0006225">
    <property type="term" value="P:UDP biosynthetic process"/>
    <property type="evidence" value="ECO:0007669"/>
    <property type="project" value="TreeGrafter"/>
</dbReference>
<dbReference type="CDD" id="cd04254">
    <property type="entry name" value="AAK_UMPK-PyrH-Ec"/>
    <property type="match status" value="1"/>
</dbReference>
<dbReference type="FunFam" id="3.40.1160.10:FF:000001">
    <property type="entry name" value="Uridylate kinase"/>
    <property type="match status" value="1"/>
</dbReference>
<dbReference type="Gene3D" id="3.40.1160.10">
    <property type="entry name" value="Acetylglutamate kinase-like"/>
    <property type="match status" value="1"/>
</dbReference>
<dbReference type="HAMAP" id="MF_01220_B">
    <property type="entry name" value="PyrH_B"/>
    <property type="match status" value="1"/>
</dbReference>
<dbReference type="InterPro" id="IPR036393">
    <property type="entry name" value="AceGlu_kinase-like_sf"/>
</dbReference>
<dbReference type="InterPro" id="IPR001048">
    <property type="entry name" value="Asp/Glu/Uridylate_kinase"/>
</dbReference>
<dbReference type="InterPro" id="IPR011817">
    <property type="entry name" value="Uridylate_kinase"/>
</dbReference>
<dbReference type="InterPro" id="IPR015963">
    <property type="entry name" value="Uridylate_kinase_bac"/>
</dbReference>
<dbReference type="NCBIfam" id="TIGR02075">
    <property type="entry name" value="pyrH_bact"/>
    <property type="match status" value="1"/>
</dbReference>
<dbReference type="PANTHER" id="PTHR42833">
    <property type="entry name" value="URIDYLATE KINASE"/>
    <property type="match status" value="1"/>
</dbReference>
<dbReference type="PANTHER" id="PTHR42833:SF4">
    <property type="entry name" value="URIDYLATE KINASE PUMPKIN, CHLOROPLASTIC"/>
    <property type="match status" value="1"/>
</dbReference>
<dbReference type="Pfam" id="PF00696">
    <property type="entry name" value="AA_kinase"/>
    <property type="match status" value="1"/>
</dbReference>
<dbReference type="PIRSF" id="PIRSF005650">
    <property type="entry name" value="Uridylate_kin"/>
    <property type="match status" value="1"/>
</dbReference>
<dbReference type="SUPFAM" id="SSF53633">
    <property type="entry name" value="Carbamate kinase-like"/>
    <property type="match status" value="1"/>
</dbReference>
<sequence>MVKYNRIVLKISGEALAGEAGFGIKPPVIATIAKQIKEVHELGVQIAIVCGGGNIWRGETGAEMGMERAQADYMGMLATVMNALALQDNLESQGVPTRVQTSIEMRQIAEPYIRRKAIRHLEKGRVVIFAGGTGNPYFSTDTTAALRAAEIGADVILMAKNNVDGVYSADPNKDTHAVKYESLTHMDIINKDLKVMDSTASTLSMDNDIDLVVFNLNEPGNIKRVVEGQKIGTTIEGRS</sequence>
<protein>
    <recommendedName>
        <fullName evidence="1">Uridylate kinase</fullName>
        <shortName evidence="1">UK</shortName>
        <ecNumber evidence="1">2.7.4.22</ecNumber>
    </recommendedName>
    <alternativeName>
        <fullName evidence="1">Uridine monophosphate kinase</fullName>
        <shortName evidence="1">UMP kinase</shortName>
        <shortName evidence="1">UMPK</shortName>
    </alternativeName>
</protein>
<organism>
    <name type="scientific">Lacticaseibacillus paracasei (strain ATCC 334 / BCRC 17002 / CCUG 31169 / CIP 107868 / KCTC 3260 / NRRL B-441)</name>
    <name type="common">Lactobacillus paracasei</name>
    <dbReference type="NCBI Taxonomy" id="321967"/>
    <lineage>
        <taxon>Bacteria</taxon>
        <taxon>Bacillati</taxon>
        <taxon>Bacillota</taxon>
        <taxon>Bacilli</taxon>
        <taxon>Lactobacillales</taxon>
        <taxon>Lactobacillaceae</taxon>
        <taxon>Lacticaseibacillus</taxon>
    </lineage>
</organism>
<feature type="chain" id="PRO_0000323869" description="Uridylate kinase">
    <location>
        <begin position="1"/>
        <end position="239"/>
    </location>
</feature>
<feature type="region of interest" description="Involved in allosteric activation by GTP" evidence="1">
    <location>
        <begin position="18"/>
        <end position="23"/>
    </location>
</feature>
<feature type="binding site" evidence="1">
    <location>
        <begin position="10"/>
        <end position="13"/>
    </location>
    <ligand>
        <name>ATP</name>
        <dbReference type="ChEBI" id="CHEBI:30616"/>
    </ligand>
</feature>
<feature type="binding site" evidence="1">
    <location>
        <position position="52"/>
    </location>
    <ligand>
        <name>UMP</name>
        <dbReference type="ChEBI" id="CHEBI:57865"/>
    </ligand>
</feature>
<feature type="binding site" evidence="1">
    <location>
        <position position="53"/>
    </location>
    <ligand>
        <name>ATP</name>
        <dbReference type="ChEBI" id="CHEBI:30616"/>
    </ligand>
</feature>
<feature type="binding site" evidence="1">
    <location>
        <position position="57"/>
    </location>
    <ligand>
        <name>ATP</name>
        <dbReference type="ChEBI" id="CHEBI:30616"/>
    </ligand>
</feature>
<feature type="binding site" evidence="1">
    <location>
        <position position="72"/>
    </location>
    <ligand>
        <name>UMP</name>
        <dbReference type="ChEBI" id="CHEBI:57865"/>
    </ligand>
</feature>
<feature type="binding site" evidence="1">
    <location>
        <begin position="133"/>
        <end position="140"/>
    </location>
    <ligand>
        <name>UMP</name>
        <dbReference type="ChEBI" id="CHEBI:57865"/>
    </ligand>
</feature>
<feature type="binding site" evidence="1">
    <location>
        <position position="161"/>
    </location>
    <ligand>
        <name>ATP</name>
        <dbReference type="ChEBI" id="CHEBI:30616"/>
    </ligand>
</feature>
<feature type="binding site" evidence="1">
    <location>
        <position position="167"/>
    </location>
    <ligand>
        <name>ATP</name>
        <dbReference type="ChEBI" id="CHEBI:30616"/>
    </ligand>
</feature>
<feature type="binding site" evidence="1">
    <location>
        <position position="170"/>
    </location>
    <ligand>
        <name>ATP</name>
        <dbReference type="ChEBI" id="CHEBI:30616"/>
    </ligand>
</feature>
<gene>
    <name evidence="1" type="primary">pyrH</name>
    <name type="ordered locus">LSEI_1584</name>
</gene>
<evidence type="ECO:0000255" key="1">
    <source>
        <dbReference type="HAMAP-Rule" id="MF_01220"/>
    </source>
</evidence>
<reference key="1">
    <citation type="journal article" date="2006" name="Proc. Natl. Acad. Sci. U.S.A.">
        <title>Comparative genomics of the lactic acid bacteria.</title>
        <authorList>
            <person name="Makarova K.S."/>
            <person name="Slesarev A."/>
            <person name="Wolf Y.I."/>
            <person name="Sorokin A."/>
            <person name="Mirkin B."/>
            <person name="Koonin E.V."/>
            <person name="Pavlov A."/>
            <person name="Pavlova N."/>
            <person name="Karamychev V."/>
            <person name="Polouchine N."/>
            <person name="Shakhova V."/>
            <person name="Grigoriev I."/>
            <person name="Lou Y."/>
            <person name="Rohksar D."/>
            <person name="Lucas S."/>
            <person name="Huang K."/>
            <person name="Goodstein D.M."/>
            <person name="Hawkins T."/>
            <person name="Plengvidhya V."/>
            <person name="Welker D."/>
            <person name="Hughes J."/>
            <person name="Goh Y."/>
            <person name="Benson A."/>
            <person name="Baldwin K."/>
            <person name="Lee J.-H."/>
            <person name="Diaz-Muniz I."/>
            <person name="Dosti B."/>
            <person name="Smeianov V."/>
            <person name="Wechter W."/>
            <person name="Barabote R."/>
            <person name="Lorca G."/>
            <person name="Altermann E."/>
            <person name="Barrangou R."/>
            <person name="Ganesan B."/>
            <person name="Xie Y."/>
            <person name="Rawsthorne H."/>
            <person name="Tamir D."/>
            <person name="Parker C."/>
            <person name="Breidt F."/>
            <person name="Broadbent J.R."/>
            <person name="Hutkins R."/>
            <person name="O'Sullivan D."/>
            <person name="Steele J."/>
            <person name="Unlu G."/>
            <person name="Saier M.H. Jr."/>
            <person name="Klaenhammer T."/>
            <person name="Richardson P."/>
            <person name="Kozyavkin S."/>
            <person name="Weimer B.C."/>
            <person name="Mills D.A."/>
        </authorList>
    </citation>
    <scope>NUCLEOTIDE SEQUENCE [LARGE SCALE GENOMIC DNA]</scope>
    <source>
        <strain>ATCC 334 / BCRC 17002 / CCUG 31169 / CIP 107868 / KCTC 3260 / NRRL B-441</strain>
    </source>
</reference>